<gene>
    <name type="primary">HVA22</name>
</gene>
<protein>
    <recommendedName>
        <fullName>Protein HVA22</fullName>
    </recommendedName>
</protein>
<dbReference type="EMBL" id="L19119">
    <property type="protein sequence ID" value="AAA16094.1"/>
    <property type="molecule type" value="Unassigned_DNA"/>
</dbReference>
<dbReference type="PIR" id="A48892">
    <property type="entry name" value="A48892"/>
</dbReference>
<dbReference type="SMR" id="Q07764"/>
<dbReference type="ExpressionAtlas" id="Q07764">
    <property type="expression patterns" value="differential"/>
</dbReference>
<dbReference type="GO" id="GO:0005783">
    <property type="term" value="C:endoplasmic reticulum"/>
    <property type="evidence" value="ECO:0000314"/>
    <property type="project" value="CACAO"/>
</dbReference>
<dbReference type="GO" id="GO:0005794">
    <property type="term" value="C:Golgi apparatus"/>
    <property type="evidence" value="ECO:0000314"/>
    <property type="project" value="CACAO"/>
</dbReference>
<dbReference type="GO" id="GO:0016020">
    <property type="term" value="C:membrane"/>
    <property type="evidence" value="ECO:0007669"/>
    <property type="project" value="UniProtKB-SubCell"/>
</dbReference>
<dbReference type="InterPro" id="IPR004345">
    <property type="entry name" value="TB2_DP1_HVA22"/>
</dbReference>
<dbReference type="PANTHER" id="PTHR12300:SF139">
    <property type="entry name" value="HVA22-LIKE PROTEIN E"/>
    <property type="match status" value="1"/>
</dbReference>
<dbReference type="PANTHER" id="PTHR12300">
    <property type="entry name" value="HVA22-LIKE PROTEINS"/>
    <property type="match status" value="1"/>
</dbReference>
<dbReference type="Pfam" id="PF03134">
    <property type="entry name" value="TB2_DP1_HVA22"/>
    <property type="match status" value="1"/>
</dbReference>
<feature type="chain" id="PRO_0000101846" description="Protein HVA22">
    <location>
        <begin position="1"/>
        <end position="130"/>
    </location>
</feature>
<feature type="transmembrane region" description="Helical" evidence="1">
    <location>
        <begin position="5"/>
        <end position="25"/>
    </location>
</feature>
<feature type="transmembrane region" description="Helical" evidence="1">
    <location>
        <begin position="42"/>
        <end position="62"/>
    </location>
</feature>
<feature type="transmembrane region" description="Helical" evidence="1">
    <location>
        <begin position="63"/>
        <end position="83"/>
    </location>
</feature>
<evidence type="ECO:0000255" key="1"/>
<evidence type="ECO:0000269" key="2">
    <source>
    </source>
</evidence>
<evidence type="ECO:0000269" key="3">
    <source>
    </source>
</evidence>
<evidence type="ECO:0000305" key="4"/>
<accession>Q07764</accession>
<organism>
    <name type="scientific">Hordeum vulgare</name>
    <name type="common">Barley</name>
    <dbReference type="NCBI Taxonomy" id="4513"/>
    <lineage>
        <taxon>Eukaryota</taxon>
        <taxon>Viridiplantae</taxon>
        <taxon>Streptophyta</taxon>
        <taxon>Embryophyta</taxon>
        <taxon>Tracheophyta</taxon>
        <taxon>Spermatophyta</taxon>
        <taxon>Magnoliopsida</taxon>
        <taxon>Liliopsida</taxon>
        <taxon>Poales</taxon>
        <taxon>Poaceae</taxon>
        <taxon>BOP clade</taxon>
        <taxon>Pooideae</taxon>
        <taxon>Triticodae</taxon>
        <taxon>Triticeae</taxon>
        <taxon>Hordeinae</taxon>
        <taxon>Hordeum</taxon>
    </lineage>
</organism>
<name>HVA22_HORVU</name>
<keyword id="KW-0472">Membrane</keyword>
<keyword id="KW-0346">Stress response</keyword>
<keyword id="KW-0812">Transmembrane</keyword>
<keyword id="KW-1133">Transmembrane helix</keyword>
<proteinExistence type="evidence at transcript level"/>
<reference key="1">
    <citation type="journal article" date="1993" name="J. Biol. Chem.">
        <title>Hormone response complex in a novel abscisic acid and cycloheximide-inducible barley gene.</title>
        <authorList>
            <person name="Shen Q."/>
            <person name="Uknes S.J."/>
            <person name="Ho T.-H.D."/>
        </authorList>
    </citation>
    <scope>NUCLEOTIDE SEQUENCE [GENOMIC DNA]</scope>
    <scope>INDUCTION</scope>
    <source>
        <tissue>Aleurone</tissue>
    </source>
</reference>
<reference key="2">
    <citation type="journal article" date="2001" name="Plant Mol. Biol.">
        <title>The stress- and abscisic acid-induced barley gene HVA22: developmental regulation and homologues in diverse organisms.</title>
        <authorList>
            <person name="Shen Q."/>
            <person name="Chen C.-N."/>
            <person name="Brands A."/>
            <person name="Pan S.-M."/>
            <person name="Ho T.-H.D."/>
        </authorList>
    </citation>
    <scope>DEVELOPMENTAL STAGE</scope>
    <scope>TISSUE SPECIFICITY</scope>
    <scope>INDUCTION</scope>
</reference>
<comment type="subcellular location">
    <subcellularLocation>
        <location evidence="4">Membrane</location>
        <topology evidence="4">Multi-pass membrane protein</topology>
    </subcellularLocation>
</comment>
<comment type="tissue specificity">
    <text evidence="2">Expressed in aleurone tissue and embryo.</text>
</comment>
<comment type="developmental stage">
    <text evidence="2">Expression increases during grain development.</text>
</comment>
<comment type="induction">
    <text evidence="2 3">By abscisic acid (ABA), cycloheximide, and by drought or cold stresses.</text>
</comment>
<comment type="similarity">
    <text evidence="4">Belongs to the DP1 family.</text>
</comment>
<sequence>MGKSWALLTHLHSVAGPSITLLYPLYASVCAMESPSKVDDEQWLAYWILYSFITLLEMVAEPVLYWIPVWYPVKLLFVAWLALPQFKGASFIYDKVVREQLRKYRGRNRNGDADHKVHILKAEADHGRVH</sequence>